<evidence type="ECO:0000255" key="1">
    <source>
        <dbReference type="HAMAP-Rule" id="MF_01537"/>
    </source>
</evidence>
<reference key="1">
    <citation type="submission" date="2007-05" db="EMBL/GenBank/DDBJ databases">
        <title>Complete sequence of Pseudomonas putida F1.</title>
        <authorList>
            <consortium name="US DOE Joint Genome Institute"/>
            <person name="Copeland A."/>
            <person name="Lucas S."/>
            <person name="Lapidus A."/>
            <person name="Barry K."/>
            <person name="Detter J.C."/>
            <person name="Glavina del Rio T."/>
            <person name="Hammon N."/>
            <person name="Israni S."/>
            <person name="Dalin E."/>
            <person name="Tice H."/>
            <person name="Pitluck S."/>
            <person name="Chain P."/>
            <person name="Malfatti S."/>
            <person name="Shin M."/>
            <person name="Vergez L."/>
            <person name="Schmutz J."/>
            <person name="Larimer F."/>
            <person name="Land M."/>
            <person name="Hauser L."/>
            <person name="Kyrpides N."/>
            <person name="Lykidis A."/>
            <person name="Parales R."/>
            <person name="Richardson P."/>
        </authorList>
    </citation>
    <scope>NUCLEOTIDE SEQUENCE [LARGE SCALE GENOMIC DNA]</scope>
    <source>
        <strain>ATCC 700007 / DSM 6899 / JCM 31910 / BCRC 17059 / LMG 24140 / F1</strain>
    </source>
</reference>
<protein>
    <recommendedName>
        <fullName evidence="1">Pyrimidine/purine nucleoside phosphorylase</fullName>
        <ecNumber evidence="1">2.4.2.1</ecNumber>
        <ecNumber evidence="1">2.4.2.2</ecNumber>
    </recommendedName>
    <alternativeName>
        <fullName evidence="1">Adenosine phosphorylase</fullName>
    </alternativeName>
    <alternativeName>
        <fullName evidence="1">Cytidine phosphorylase</fullName>
    </alternativeName>
    <alternativeName>
        <fullName evidence="1">Guanosine phosphorylase</fullName>
    </alternativeName>
    <alternativeName>
        <fullName evidence="1">Inosine phosphorylase</fullName>
    </alternativeName>
    <alternativeName>
        <fullName evidence="1">Thymidine phosphorylase</fullName>
    </alternativeName>
    <alternativeName>
        <fullName evidence="1">Uridine phosphorylase</fullName>
    </alternativeName>
    <alternativeName>
        <fullName evidence="1">Xanthosine phosphorylase</fullName>
    </alternativeName>
</protein>
<proteinExistence type="inferred from homology"/>
<organism>
    <name type="scientific">Pseudomonas putida (strain ATCC 700007 / DSM 6899 / JCM 31910 / BCRC 17059 / LMG 24140 / F1)</name>
    <dbReference type="NCBI Taxonomy" id="351746"/>
    <lineage>
        <taxon>Bacteria</taxon>
        <taxon>Pseudomonadati</taxon>
        <taxon>Pseudomonadota</taxon>
        <taxon>Gammaproteobacteria</taxon>
        <taxon>Pseudomonadales</taxon>
        <taxon>Pseudomonadaceae</taxon>
        <taxon>Pseudomonas</taxon>
    </lineage>
</organism>
<gene>
    <name evidence="1" type="primary">ppnP</name>
    <name type="ordered locus">Pput_1620</name>
</gene>
<accession>A5W0W6</accession>
<dbReference type="EC" id="2.4.2.1" evidence="1"/>
<dbReference type="EC" id="2.4.2.2" evidence="1"/>
<dbReference type="EMBL" id="CP000712">
    <property type="protein sequence ID" value="ABQ77776.1"/>
    <property type="molecule type" value="Genomic_DNA"/>
</dbReference>
<dbReference type="SMR" id="A5W0W6"/>
<dbReference type="KEGG" id="ppf:Pput_1620"/>
<dbReference type="eggNOG" id="COG3123">
    <property type="taxonomic scope" value="Bacteria"/>
</dbReference>
<dbReference type="HOGENOM" id="CLU_157874_0_0_6"/>
<dbReference type="GO" id="GO:0005829">
    <property type="term" value="C:cytosol"/>
    <property type="evidence" value="ECO:0007669"/>
    <property type="project" value="TreeGrafter"/>
</dbReference>
<dbReference type="GO" id="GO:0047975">
    <property type="term" value="F:guanosine phosphorylase activity"/>
    <property type="evidence" value="ECO:0007669"/>
    <property type="project" value="UniProtKB-EC"/>
</dbReference>
<dbReference type="GO" id="GO:0004731">
    <property type="term" value="F:purine-nucleoside phosphorylase activity"/>
    <property type="evidence" value="ECO:0007669"/>
    <property type="project" value="UniProtKB-UniRule"/>
</dbReference>
<dbReference type="GO" id="GO:0009032">
    <property type="term" value="F:thymidine phosphorylase activity"/>
    <property type="evidence" value="ECO:0007669"/>
    <property type="project" value="UniProtKB-EC"/>
</dbReference>
<dbReference type="GO" id="GO:0004850">
    <property type="term" value="F:uridine phosphorylase activity"/>
    <property type="evidence" value="ECO:0007669"/>
    <property type="project" value="UniProtKB-EC"/>
</dbReference>
<dbReference type="CDD" id="cd20296">
    <property type="entry name" value="cupin_PpnP-like"/>
    <property type="match status" value="1"/>
</dbReference>
<dbReference type="FunFam" id="2.60.120.10:FF:000016">
    <property type="entry name" value="Pyrimidine/purine nucleoside phosphorylase"/>
    <property type="match status" value="1"/>
</dbReference>
<dbReference type="Gene3D" id="2.60.120.10">
    <property type="entry name" value="Jelly Rolls"/>
    <property type="match status" value="1"/>
</dbReference>
<dbReference type="HAMAP" id="MF_01537">
    <property type="entry name" value="Nucleos_phosphorylase_PpnP"/>
    <property type="match status" value="1"/>
</dbReference>
<dbReference type="InterPro" id="IPR009664">
    <property type="entry name" value="Ppnp"/>
</dbReference>
<dbReference type="InterPro" id="IPR014710">
    <property type="entry name" value="RmlC-like_jellyroll"/>
</dbReference>
<dbReference type="InterPro" id="IPR011051">
    <property type="entry name" value="RmlC_Cupin_sf"/>
</dbReference>
<dbReference type="PANTHER" id="PTHR36540">
    <property type="entry name" value="PYRIMIDINE/PURINE NUCLEOSIDE PHOSPHORYLASE"/>
    <property type="match status" value="1"/>
</dbReference>
<dbReference type="PANTHER" id="PTHR36540:SF1">
    <property type="entry name" value="PYRIMIDINE_PURINE NUCLEOSIDE PHOSPHORYLASE"/>
    <property type="match status" value="1"/>
</dbReference>
<dbReference type="Pfam" id="PF06865">
    <property type="entry name" value="Ppnp"/>
    <property type="match status" value="1"/>
</dbReference>
<dbReference type="SUPFAM" id="SSF51182">
    <property type="entry name" value="RmlC-like cupins"/>
    <property type="match status" value="1"/>
</dbReference>
<comment type="function">
    <text evidence="1">Catalyzes the phosphorolysis of diverse nucleosides, yielding D-ribose 1-phosphate and the respective free bases. Can use uridine, adenosine, guanosine, cytidine, thymidine, inosine and xanthosine as substrates. Also catalyzes the reverse reactions.</text>
</comment>
<comment type="catalytic activity">
    <reaction evidence="1">
        <text>a purine D-ribonucleoside + phosphate = a purine nucleobase + alpha-D-ribose 1-phosphate</text>
        <dbReference type="Rhea" id="RHEA:19805"/>
        <dbReference type="ChEBI" id="CHEBI:26386"/>
        <dbReference type="ChEBI" id="CHEBI:43474"/>
        <dbReference type="ChEBI" id="CHEBI:57720"/>
        <dbReference type="ChEBI" id="CHEBI:142355"/>
        <dbReference type="EC" id="2.4.2.1"/>
    </reaction>
</comment>
<comment type="catalytic activity">
    <reaction evidence="1">
        <text>adenosine + phosphate = alpha-D-ribose 1-phosphate + adenine</text>
        <dbReference type="Rhea" id="RHEA:27642"/>
        <dbReference type="ChEBI" id="CHEBI:16335"/>
        <dbReference type="ChEBI" id="CHEBI:16708"/>
        <dbReference type="ChEBI" id="CHEBI:43474"/>
        <dbReference type="ChEBI" id="CHEBI:57720"/>
        <dbReference type="EC" id="2.4.2.1"/>
    </reaction>
</comment>
<comment type="catalytic activity">
    <reaction evidence="1">
        <text>cytidine + phosphate = cytosine + alpha-D-ribose 1-phosphate</text>
        <dbReference type="Rhea" id="RHEA:52540"/>
        <dbReference type="ChEBI" id="CHEBI:16040"/>
        <dbReference type="ChEBI" id="CHEBI:17562"/>
        <dbReference type="ChEBI" id="CHEBI:43474"/>
        <dbReference type="ChEBI" id="CHEBI:57720"/>
        <dbReference type="EC" id="2.4.2.2"/>
    </reaction>
</comment>
<comment type="catalytic activity">
    <reaction evidence="1">
        <text>guanosine + phosphate = alpha-D-ribose 1-phosphate + guanine</text>
        <dbReference type="Rhea" id="RHEA:13233"/>
        <dbReference type="ChEBI" id="CHEBI:16235"/>
        <dbReference type="ChEBI" id="CHEBI:16750"/>
        <dbReference type="ChEBI" id="CHEBI:43474"/>
        <dbReference type="ChEBI" id="CHEBI:57720"/>
        <dbReference type="EC" id="2.4.2.1"/>
    </reaction>
</comment>
<comment type="catalytic activity">
    <reaction evidence="1">
        <text>inosine + phosphate = alpha-D-ribose 1-phosphate + hypoxanthine</text>
        <dbReference type="Rhea" id="RHEA:27646"/>
        <dbReference type="ChEBI" id="CHEBI:17368"/>
        <dbReference type="ChEBI" id="CHEBI:17596"/>
        <dbReference type="ChEBI" id="CHEBI:43474"/>
        <dbReference type="ChEBI" id="CHEBI:57720"/>
        <dbReference type="EC" id="2.4.2.1"/>
    </reaction>
</comment>
<comment type="catalytic activity">
    <reaction evidence="1">
        <text>thymidine + phosphate = 2-deoxy-alpha-D-ribose 1-phosphate + thymine</text>
        <dbReference type="Rhea" id="RHEA:16037"/>
        <dbReference type="ChEBI" id="CHEBI:17748"/>
        <dbReference type="ChEBI" id="CHEBI:17821"/>
        <dbReference type="ChEBI" id="CHEBI:43474"/>
        <dbReference type="ChEBI" id="CHEBI:57259"/>
        <dbReference type="EC" id="2.4.2.2"/>
    </reaction>
</comment>
<comment type="catalytic activity">
    <reaction evidence="1">
        <text>uridine + phosphate = alpha-D-ribose 1-phosphate + uracil</text>
        <dbReference type="Rhea" id="RHEA:24388"/>
        <dbReference type="ChEBI" id="CHEBI:16704"/>
        <dbReference type="ChEBI" id="CHEBI:17568"/>
        <dbReference type="ChEBI" id="CHEBI:43474"/>
        <dbReference type="ChEBI" id="CHEBI:57720"/>
        <dbReference type="EC" id="2.4.2.2"/>
    </reaction>
</comment>
<comment type="catalytic activity">
    <reaction evidence="1">
        <text>xanthosine + phosphate = alpha-D-ribose 1-phosphate + xanthine</text>
        <dbReference type="Rhea" id="RHEA:27638"/>
        <dbReference type="ChEBI" id="CHEBI:17712"/>
        <dbReference type="ChEBI" id="CHEBI:18107"/>
        <dbReference type="ChEBI" id="CHEBI:43474"/>
        <dbReference type="ChEBI" id="CHEBI:57720"/>
        <dbReference type="EC" id="2.4.2.1"/>
    </reaction>
</comment>
<comment type="similarity">
    <text evidence="1">Belongs to the nucleoside phosphorylase PpnP family.</text>
</comment>
<sequence>MFQVNEYFNGTVKSIAFSGEEGPATVGVMAPGEYEFGTAKREIMHVVSGALTVKLPGSDNWETFNAGDKFNVPADSKFQLQVKVDTAYLCEYRD</sequence>
<name>PPNP_PSEP1</name>
<feature type="chain" id="PRO_1000068735" description="Pyrimidine/purine nucleoside phosphorylase">
    <location>
        <begin position="1"/>
        <end position="94"/>
    </location>
</feature>
<keyword id="KW-0328">Glycosyltransferase</keyword>
<keyword id="KW-0808">Transferase</keyword>